<accession>Q3J0K8</accession>
<dbReference type="EMBL" id="CP000143">
    <property type="protein sequence ID" value="ABA79676.1"/>
    <property type="molecule type" value="Genomic_DNA"/>
</dbReference>
<dbReference type="RefSeq" id="WP_011338274.1">
    <property type="nucleotide sequence ID" value="NC_007493.2"/>
</dbReference>
<dbReference type="RefSeq" id="YP_353577.1">
    <property type="nucleotide sequence ID" value="NC_007493.2"/>
</dbReference>
<dbReference type="SMR" id="Q3J0K8"/>
<dbReference type="STRING" id="272943.RSP_0505"/>
<dbReference type="EnsemblBacteria" id="ABA79676">
    <property type="protein sequence ID" value="ABA79676"/>
    <property type="gene ID" value="RSP_0505"/>
</dbReference>
<dbReference type="GeneID" id="3718456"/>
<dbReference type="KEGG" id="rsp:RSP_0505"/>
<dbReference type="PATRIC" id="fig|272943.9.peg.2453"/>
<dbReference type="eggNOG" id="COG0375">
    <property type="taxonomic scope" value="Bacteria"/>
</dbReference>
<dbReference type="OrthoDB" id="288014at2"/>
<dbReference type="PhylomeDB" id="Q3J0K8"/>
<dbReference type="Proteomes" id="UP000002703">
    <property type="component" value="Chromosome 1"/>
</dbReference>
<dbReference type="GO" id="GO:0016151">
    <property type="term" value="F:nickel cation binding"/>
    <property type="evidence" value="ECO:0007669"/>
    <property type="project" value="UniProtKB-UniRule"/>
</dbReference>
<dbReference type="GO" id="GO:0008270">
    <property type="term" value="F:zinc ion binding"/>
    <property type="evidence" value="ECO:0007669"/>
    <property type="project" value="UniProtKB-UniRule"/>
</dbReference>
<dbReference type="GO" id="GO:0051604">
    <property type="term" value="P:protein maturation"/>
    <property type="evidence" value="ECO:0007669"/>
    <property type="project" value="InterPro"/>
</dbReference>
<dbReference type="GO" id="GO:0036211">
    <property type="term" value="P:protein modification process"/>
    <property type="evidence" value="ECO:0007669"/>
    <property type="project" value="UniProtKB-UniRule"/>
</dbReference>
<dbReference type="Gene3D" id="3.30.2320.80">
    <property type="match status" value="1"/>
</dbReference>
<dbReference type="HAMAP" id="MF_00213">
    <property type="entry name" value="HypA_HybF"/>
    <property type="match status" value="1"/>
</dbReference>
<dbReference type="InterPro" id="IPR020538">
    <property type="entry name" value="Hydgase_Ni_incorp_HypA/HybF_CS"/>
</dbReference>
<dbReference type="InterPro" id="IPR000688">
    <property type="entry name" value="HypA/HybF"/>
</dbReference>
<dbReference type="NCBIfam" id="TIGR00100">
    <property type="entry name" value="hypA"/>
    <property type="match status" value="1"/>
</dbReference>
<dbReference type="PANTHER" id="PTHR34535">
    <property type="entry name" value="HYDROGENASE MATURATION FACTOR HYPA"/>
    <property type="match status" value="1"/>
</dbReference>
<dbReference type="PANTHER" id="PTHR34535:SF3">
    <property type="entry name" value="HYDROGENASE MATURATION FACTOR HYPA"/>
    <property type="match status" value="1"/>
</dbReference>
<dbReference type="Pfam" id="PF01155">
    <property type="entry name" value="HypA"/>
    <property type="match status" value="1"/>
</dbReference>
<dbReference type="PIRSF" id="PIRSF004761">
    <property type="entry name" value="Hydrgn_mat_HypA"/>
    <property type="match status" value="1"/>
</dbReference>
<dbReference type="PROSITE" id="PS01249">
    <property type="entry name" value="HYPA"/>
    <property type="match status" value="1"/>
</dbReference>
<comment type="function">
    <text evidence="1">Involved in the maturation of [NiFe] hydrogenases. Required for nickel insertion into the metal center of the hydrogenase.</text>
</comment>
<comment type="similarity">
    <text evidence="1">Belongs to the HypA/HybF family.</text>
</comment>
<name>HYPA_CERS4</name>
<protein>
    <recommendedName>
        <fullName evidence="1">Hydrogenase maturation factor HypA</fullName>
    </recommendedName>
</protein>
<feature type="chain" id="PRO_1000023855" description="Hydrogenase maturation factor HypA">
    <location>
        <begin position="1"/>
        <end position="113"/>
    </location>
</feature>
<feature type="binding site" evidence="1">
    <location>
        <position position="2"/>
    </location>
    <ligand>
        <name>Ni(2+)</name>
        <dbReference type="ChEBI" id="CHEBI:49786"/>
    </ligand>
</feature>
<feature type="binding site" evidence="1">
    <location>
        <position position="73"/>
    </location>
    <ligand>
        <name>Zn(2+)</name>
        <dbReference type="ChEBI" id="CHEBI:29105"/>
    </ligand>
</feature>
<feature type="binding site" evidence="1">
    <location>
        <position position="76"/>
    </location>
    <ligand>
        <name>Zn(2+)</name>
        <dbReference type="ChEBI" id="CHEBI:29105"/>
    </ligand>
</feature>
<feature type="binding site" evidence="1">
    <location>
        <position position="89"/>
    </location>
    <ligand>
        <name>Zn(2+)</name>
        <dbReference type="ChEBI" id="CHEBI:29105"/>
    </ligand>
</feature>
<feature type="binding site" evidence="1">
    <location>
        <position position="92"/>
    </location>
    <ligand>
        <name>Zn(2+)</name>
        <dbReference type="ChEBI" id="CHEBI:29105"/>
    </ligand>
</feature>
<keyword id="KW-0479">Metal-binding</keyword>
<keyword id="KW-0533">Nickel</keyword>
<keyword id="KW-1185">Reference proteome</keyword>
<keyword id="KW-0862">Zinc</keyword>
<evidence type="ECO:0000255" key="1">
    <source>
        <dbReference type="HAMAP-Rule" id="MF_00213"/>
    </source>
</evidence>
<gene>
    <name evidence="1" type="primary">hypA</name>
    <name type="ordered locus">RHOS4_21080</name>
    <name type="ORF">RSP_0505</name>
</gene>
<reference key="1">
    <citation type="submission" date="2005-09" db="EMBL/GenBank/DDBJ databases">
        <title>Complete sequence of chromosome 1 of Rhodobacter sphaeroides 2.4.1.</title>
        <authorList>
            <person name="Copeland A."/>
            <person name="Lucas S."/>
            <person name="Lapidus A."/>
            <person name="Barry K."/>
            <person name="Detter J.C."/>
            <person name="Glavina T."/>
            <person name="Hammon N."/>
            <person name="Israni S."/>
            <person name="Pitluck S."/>
            <person name="Richardson P."/>
            <person name="Mackenzie C."/>
            <person name="Choudhary M."/>
            <person name="Larimer F."/>
            <person name="Hauser L.J."/>
            <person name="Land M."/>
            <person name="Donohue T.J."/>
            <person name="Kaplan S."/>
        </authorList>
    </citation>
    <scope>NUCLEOTIDE SEQUENCE [LARGE SCALE GENOMIC DNA]</scope>
    <source>
        <strain>ATCC 17023 / DSM 158 / JCM 6121 / CCUG 31486 / LMG 2827 / NBRC 12203 / NCIMB 8253 / ATH 2.4.1.</strain>
    </source>
</reference>
<sequence length="113" mass="12227">MHEMSLCEGIRGIVGDQARRHGFATVKVLRLEIGRFAGVEKAALGFAFDVVMRGSAAEGARLEILDLPGRALCYDCGEEAAIEDRFDPCPLCGGGRLMPVGGDEMRIKDMEVQ</sequence>
<proteinExistence type="inferred from homology"/>
<organism>
    <name type="scientific">Cereibacter sphaeroides (strain ATCC 17023 / DSM 158 / JCM 6121 / CCUG 31486 / LMG 2827 / NBRC 12203 / NCIMB 8253 / ATH 2.4.1.)</name>
    <name type="common">Rhodobacter sphaeroides</name>
    <dbReference type="NCBI Taxonomy" id="272943"/>
    <lineage>
        <taxon>Bacteria</taxon>
        <taxon>Pseudomonadati</taxon>
        <taxon>Pseudomonadota</taxon>
        <taxon>Alphaproteobacteria</taxon>
        <taxon>Rhodobacterales</taxon>
        <taxon>Paracoccaceae</taxon>
        <taxon>Cereibacter</taxon>
    </lineage>
</organism>